<dbReference type="EC" id="2.1.1.107" evidence="1"/>
<dbReference type="EC" id="1.3.1.76" evidence="1"/>
<dbReference type="EC" id="4.99.1.4" evidence="1"/>
<dbReference type="EMBL" id="CP000857">
    <property type="protein sequence ID" value="ACN47630.1"/>
    <property type="molecule type" value="Genomic_DNA"/>
</dbReference>
<dbReference type="RefSeq" id="WP_000349897.1">
    <property type="nucleotide sequence ID" value="NC_012125.1"/>
</dbReference>
<dbReference type="SMR" id="C0Q0F3"/>
<dbReference type="KEGG" id="sei:SPC_3547"/>
<dbReference type="HOGENOM" id="CLU_011276_2_0_6"/>
<dbReference type="UniPathway" id="UPA00148">
    <property type="reaction ID" value="UER00211"/>
</dbReference>
<dbReference type="UniPathway" id="UPA00148">
    <property type="reaction ID" value="UER00222"/>
</dbReference>
<dbReference type="UniPathway" id="UPA00262">
    <property type="reaction ID" value="UER00211"/>
</dbReference>
<dbReference type="UniPathway" id="UPA00262">
    <property type="reaction ID" value="UER00222"/>
</dbReference>
<dbReference type="UniPathway" id="UPA00262">
    <property type="reaction ID" value="UER00376"/>
</dbReference>
<dbReference type="Proteomes" id="UP000001599">
    <property type="component" value="Chromosome"/>
</dbReference>
<dbReference type="GO" id="GO:0051287">
    <property type="term" value="F:NAD binding"/>
    <property type="evidence" value="ECO:0007669"/>
    <property type="project" value="InterPro"/>
</dbReference>
<dbReference type="GO" id="GO:0043115">
    <property type="term" value="F:precorrin-2 dehydrogenase activity"/>
    <property type="evidence" value="ECO:0007669"/>
    <property type="project" value="UniProtKB-UniRule"/>
</dbReference>
<dbReference type="GO" id="GO:0051266">
    <property type="term" value="F:sirohydrochlorin ferrochelatase activity"/>
    <property type="evidence" value="ECO:0007669"/>
    <property type="project" value="UniProtKB-EC"/>
</dbReference>
<dbReference type="GO" id="GO:0004851">
    <property type="term" value="F:uroporphyrin-III C-methyltransferase activity"/>
    <property type="evidence" value="ECO:0007669"/>
    <property type="project" value="UniProtKB-UniRule"/>
</dbReference>
<dbReference type="GO" id="GO:0009236">
    <property type="term" value="P:cobalamin biosynthetic process"/>
    <property type="evidence" value="ECO:0007669"/>
    <property type="project" value="UniProtKB-UniRule"/>
</dbReference>
<dbReference type="GO" id="GO:0032259">
    <property type="term" value="P:methylation"/>
    <property type="evidence" value="ECO:0007669"/>
    <property type="project" value="UniProtKB-KW"/>
</dbReference>
<dbReference type="GO" id="GO:0019354">
    <property type="term" value="P:siroheme biosynthetic process"/>
    <property type="evidence" value="ECO:0007669"/>
    <property type="project" value="UniProtKB-UniRule"/>
</dbReference>
<dbReference type="CDD" id="cd11642">
    <property type="entry name" value="SUMT"/>
    <property type="match status" value="1"/>
</dbReference>
<dbReference type="FunFam" id="1.10.8.210:FF:000001">
    <property type="entry name" value="Siroheme synthase"/>
    <property type="match status" value="1"/>
</dbReference>
<dbReference type="FunFam" id="3.30.160.110:FF:000001">
    <property type="entry name" value="Siroheme synthase"/>
    <property type="match status" value="1"/>
</dbReference>
<dbReference type="FunFam" id="3.30.950.10:FF:000001">
    <property type="entry name" value="Siroheme synthase"/>
    <property type="match status" value="1"/>
</dbReference>
<dbReference type="FunFam" id="3.40.1010.10:FF:000001">
    <property type="entry name" value="Siroheme synthase"/>
    <property type="match status" value="1"/>
</dbReference>
<dbReference type="FunFam" id="3.40.50.720:FF:000092">
    <property type="entry name" value="Siroheme synthase"/>
    <property type="match status" value="1"/>
</dbReference>
<dbReference type="Gene3D" id="3.40.1010.10">
    <property type="entry name" value="Cobalt-precorrin-4 Transmethylase, Domain 1"/>
    <property type="match status" value="1"/>
</dbReference>
<dbReference type="Gene3D" id="3.30.950.10">
    <property type="entry name" value="Methyltransferase, Cobalt-precorrin-4 Transmethylase, Domain 2"/>
    <property type="match status" value="1"/>
</dbReference>
<dbReference type="Gene3D" id="3.40.50.720">
    <property type="entry name" value="NAD(P)-binding Rossmann-like Domain"/>
    <property type="match status" value="1"/>
</dbReference>
<dbReference type="Gene3D" id="1.10.8.210">
    <property type="entry name" value="Sirohaem synthase, dimerisation domain"/>
    <property type="match status" value="1"/>
</dbReference>
<dbReference type="Gene3D" id="3.30.160.110">
    <property type="entry name" value="Siroheme synthase, domain 2"/>
    <property type="match status" value="1"/>
</dbReference>
<dbReference type="HAMAP" id="MF_01646">
    <property type="entry name" value="Siroheme_synth"/>
    <property type="match status" value="1"/>
</dbReference>
<dbReference type="InterPro" id="IPR000878">
    <property type="entry name" value="4pyrrol_Mease"/>
</dbReference>
<dbReference type="InterPro" id="IPR035996">
    <property type="entry name" value="4pyrrol_Methylase_sf"/>
</dbReference>
<dbReference type="InterPro" id="IPR014777">
    <property type="entry name" value="4pyrrole_Mease_sub1"/>
</dbReference>
<dbReference type="InterPro" id="IPR014776">
    <property type="entry name" value="4pyrrole_Mease_sub2"/>
</dbReference>
<dbReference type="InterPro" id="IPR006366">
    <property type="entry name" value="CobA/CysG_C"/>
</dbReference>
<dbReference type="InterPro" id="IPR036291">
    <property type="entry name" value="NAD(P)-bd_dom_sf"/>
</dbReference>
<dbReference type="InterPro" id="IPR050161">
    <property type="entry name" value="Siro_Cobalamin_biosynth"/>
</dbReference>
<dbReference type="InterPro" id="IPR037115">
    <property type="entry name" value="Sirohaem_synt_dimer_dom_sf"/>
</dbReference>
<dbReference type="InterPro" id="IPR012409">
    <property type="entry name" value="Sirohaem_synth"/>
</dbReference>
<dbReference type="InterPro" id="IPR028281">
    <property type="entry name" value="Sirohaem_synthase_central"/>
</dbReference>
<dbReference type="InterPro" id="IPR019478">
    <property type="entry name" value="Sirohaem_synthase_dimer_dom"/>
</dbReference>
<dbReference type="InterPro" id="IPR006367">
    <property type="entry name" value="Sirohaem_synthase_N"/>
</dbReference>
<dbReference type="InterPro" id="IPR003043">
    <property type="entry name" value="Uropor_MeTrfase_CS"/>
</dbReference>
<dbReference type="NCBIfam" id="TIGR01469">
    <property type="entry name" value="cobA_cysG_Cterm"/>
    <property type="match status" value="1"/>
</dbReference>
<dbReference type="NCBIfam" id="TIGR01470">
    <property type="entry name" value="cysG_Nterm"/>
    <property type="match status" value="1"/>
</dbReference>
<dbReference type="NCBIfam" id="NF004790">
    <property type="entry name" value="PRK06136.1"/>
    <property type="match status" value="1"/>
</dbReference>
<dbReference type="NCBIfam" id="NF007922">
    <property type="entry name" value="PRK10637.1"/>
    <property type="match status" value="1"/>
</dbReference>
<dbReference type="PANTHER" id="PTHR45790:SF1">
    <property type="entry name" value="SIROHEME SYNTHASE"/>
    <property type="match status" value="1"/>
</dbReference>
<dbReference type="PANTHER" id="PTHR45790">
    <property type="entry name" value="SIROHEME SYNTHASE-RELATED"/>
    <property type="match status" value="1"/>
</dbReference>
<dbReference type="Pfam" id="PF10414">
    <property type="entry name" value="CysG_dimeriser"/>
    <property type="match status" value="1"/>
</dbReference>
<dbReference type="Pfam" id="PF13241">
    <property type="entry name" value="NAD_binding_7"/>
    <property type="match status" value="1"/>
</dbReference>
<dbReference type="Pfam" id="PF14824">
    <property type="entry name" value="Sirohm_synth_M"/>
    <property type="match status" value="1"/>
</dbReference>
<dbReference type="Pfam" id="PF00590">
    <property type="entry name" value="TP_methylase"/>
    <property type="match status" value="1"/>
</dbReference>
<dbReference type="PIRSF" id="PIRSF036426">
    <property type="entry name" value="Sirohaem_synth"/>
    <property type="match status" value="1"/>
</dbReference>
<dbReference type="SUPFAM" id="SSF51735">
    <property type="entry name" value="NAD(P)-binding Rossmann-fold domains"/>
    <property type="match status" value="1"/>
</dbReference>
<dbReference type="SUPFAM" id="SSF75615">
    <property type="entry name" value="Siroheme synthase middle domains-like"/>
    <property type="match status" value="1"/>
</dbReference>
<dbReference type="SUPFAM" id="SSF53790">
    <property type="entry name" value="Tetrapyrrole methylase"/>
    <property type="match status" value="1"/>
</dbReference>
<dbReference type="PROSITE" id="PS00839">
    <property type="entry name" value="SUMT_1"/>
    <property type="match status" value="1"/>
</dbReference>
<dbReference type="PROSITE" id="PS00840">
    <property type="entry name" value="SUMT_2"/>
    <property type="match status" value="1"/>
</dbReference>
<proteinExistence type="inferred from homology"/>
<comment type="function">
    <text evidence="1">Multifunctional enzyme that catalyzes the SAM-dependent methylations of uroporphyrinogen III at position C-2 and C-7 to form precorrin-2 via precorrin-1. Then it catalyzes the NAD-dependent ring dehydrogenation of precorrin-2 to yield sirohydrochlorin. Finally, it catalyzes the ferrochelation of sirohydrochlorin to yield siroheme.</text>
</comment>
<comment type="catalytic activity">
    <reaction evidence="1">
        <text>uroporphyrinogen III + 2 S-adenosyl-L-methionine = precorrin-2 + 2 S-adenosyl-L-homocysteine + H(+)</text>
        <dbReference type="Rhea" id="RHEA:32459"/>
        <dbReference type="ChEBI" id="CHEBI:15378"/>
        <dbReference type="ChEBI" id="CHEBI:57308"/>
        <dbReference type="ChEBI" id="CHEBI:57856"/>
        <dbReference type="ChEBI" id="CHEBI:58827"/>
        <dbReference type="ChEBI" id="CHEBI:59789"/>
        <dbReference type="EC" id="2.1.1.107"/>
    </reaction>
</comment>
<comment type="catalytic activity">
    <reaction evidence="1">
        <text>precorrin-2 + NAD(+) = sirohydrochlorin + NADH + 2 H(+)</text>
        <dbReference type="Rhea" id="RHEA:15613"/>
        <dbReference type="ChEBI" id="CHEBI:15378"/>
        <dbReference type="ChEBI" id="CHEBI:57540"/>
        <dbReference type="ChEBI" id="CHEBI:57945"/>
        <dbReference type="ChEBI" id="CHEBI:58351"/>
        <dbReference type="ChEBI" id="CHEBI:58827"/>
        <dbReference type="EC" id="1.3.1.76"/>
    </reaction>
</comment>
<comment type="catalytic activity">
    <reaction evidence="1">
        <text>siroheme + 2 H(+) = sirohydrochlorin + Fe(2+)</text>
        <dbReference type="Rhea" id="RHEA:24360"/>
        <dbReference type="ChEBI" id="CHEBI:15378"/>
        <dbReference type="ChEBI" id="CHEBI:29033"/>
        <dbReference type="ChEBI" id="CHEBI:58351"/>
        <dbReference type="ChEBI" id="CHEBI:60052"/>
        <dbReference type="EC" id="4.99.1.4"/>
    </reaction>
</comment>
<comment type="pathway">
    <text evidence="1">Cofactor biosynthesis; adenosylcobalamin biosynthesis; precorrin-2 from uroporphyrinogen III: step 1/1.</text>
</comment>
<comment type="pathway">
    <text evidence="1">Cofactor biosynthesis; adenosylcobalamin biosynthesis; sirohydrochlorin from precorrin-2: step 1/1.</text>
</comment>
<comment type="pathway">
    <text evidence="1">Porphyrin-containing compound metabolism; siroheme biosynthesis; precorrin-2 from uroporphyrinogen III: step 1/1.</text>
</comment>
<comment type="pathway">
    <text evidence="1">Porphyrin-containing compound metabolism; siroheme biosynthesis; siroheme from sirohydrochlorin: step 1/1.</text>
</comment>
<comment type="pathway">
    <text evidence="1">Porphyrin-containing compound metabolism; siroheme biosynthesis; sirohydrochlorin from precorrin-2: step 1/1.</text>
</comment>
<comment type="similarity">
    <text evidence="1">In the N-terminal section; belongs to the precorrin-2 dehydrogenase / sirohydrochlorin ferrochelatase family.</text>
</comment>
<comment type="similarity">
    <text evidence="1">In the C-terminal section; belongs to the precorrin methyltransferase family.</text>
</comment>
<name>CYSG_SALPC</name>
<gene>
    <name evidence="1" type="primary">cysG</name>
    <name type="ordered locus">SPC_3547</name>
</gene>
<keyword id="KW-0169">Cobalamin biosynthesis</keyword>
<keyword id="KW-0456">Lyase</keyword>
<keyword id="KW-0489">Methyltransferase</keyword>
<keyword id="KW-0511">Multifunctional enzyme</keyword>
<keyword id="KW-0520">NAD</keyword>
<keyword id="KW-0560">Oxidoreductase</keyword>
<keyword id="KW-0597">Phosphoprotein</keyword>
<keyword id="KW-0627">Porphyrin biosynthesis</keyword>
<keyword id="KW-0949">S-adenosyl-L-methionine</keyword>
<keyword id="KW-0808">Transferase</keyword>
<feature type="chain" id="PRO_1000186956" description="Siroheme synthase">
    <location>
        <begin position="1"/>
        <end position="457"/>
    </location>
</feature>
<feature type="region of interest" description="Precorrin-2 dehydrogenase /sirohydrochlorin ferrochelatase" evidence="1">
    <location>
        <begin position="1"/>
        <end position="204"/>
    </location>
</feature>
<feature type="region of interest" description="Uroporphyrinogen-III C-methyltransferase" evidence="1">
    <location>
        <begin position="216"/>
        <end position="457"/>
    </location>
</feature>
<feature type="active site" description="Proton acceptor" evidence="1">
    <location>
        <position position="248"/>
    </location>
</feature>
<feature type="active site" description="Proton donor" evidence="1">
    <location>
        <position position="270"/>
    </location>
</feature>
<feature type="binding site" evidence="1">
    <location>
        <begin position="22"/>
        <end position="23"/>
    </location>
    <ligand>
        <name>NAD(+)</name>
        <dbReference type="ChEBI" id="CHEBI:57540"/>
    </ligand>
</feature>
<feature type="binding site" evidence="1">
    <location>
        <begin position="43"/>
        <end position="44"/>
    </location>
    <ligand>
        <name>NAD(+)</name>
        <dbReference type="ChEBI" id="CHEBI:57540"/>
    </ligand>
</feature>
<feature type="binding site" evidence="1">
    <location>
        <position position="225"/>
    </location>
    <ligand>
        <name>S-adenosyl-L-methionine</name>
        <dbReference type="ChEBI" id="CHEBI:59789"/>
    </ligand>
</feature>
<feature type="binding site" evidence="1">
    <location>
        <begin position="301"/>
        <end position="303"/>
    </location>
    <ligand>
        <name>S-adenosyl-L-methionine</name>
        <dbReference type="ChEBI" id="CHEBI:59789"/>
    </ligand>
</feature>
<feature type="binding site" evidence="1">
    <location>
        <position position="306"/>
    </location>
    <ligand>
        <name>S-adenosyl-L-methionine</name>
        <dbReference type="ChEBI" id="CHEBI:59789"/>
    </ligand>
</feature>
<feature type="binding site" evidence="1">
    <location>
        <begin position="331"/>
        <end position="332"/>
    </location>
    <ligand>
        <name>S-adenosyl-L-methionine</name>
        <dbReference type="ChEBI" id="CHEBI:59789"/>
    </ligand>
</feature>
<feature type="binding site" evidence="1">
    <location>
        <position position="382"/>
    </location>
    <ligand>
        <name>S-adenosyl-L-methionine</name>
        <dbReference type="ChEBI" id="CHEBI:59789"/>
    </ligand>
</feature>
<feature type="binding site" evidence="1">
    <location>
        <position position="411"/>
    </location>
    <ligand>
        <name>S-adenosyl-L-methionine</name>
        <dbReference type="ChEBI" id="CHEBI:59789"/>
    </ligand>
</feature>
<feature type="modified residue" description="Phosphoserine" evidence="1">
    <location>
        <position position="128"/>
    </location>
</feature>
<evidence type="ECO:0000255" key="1">
    <source>
        <dbReference type="HAMAP-Rule" id="MF_01646"/>
    </source>
</evidence>
<organism>
    <name type="scientific">Salmonella paratyphi C (strain RKS4594)</name>
    <dbReference type="NCBI Taxonomy" id="476213"/>
    <lineage>
        <taxon>Bacteria</taxon>
        <taxon>Pseudomonadati</taxon>
        <taxon>Pseudomonadota</taxon>
        <taxon>Gammaproteobacteria</taxon>
        <taxon>Enterobacterales</taxon>
        <taxon>Enterobacteriaceae</taxon>
        <taxon>Salmonella</taxon>
    </lineage>
</organism>
<reference key="1">
    <citation type="journal article" date="2009" name="PLoS ONE">
        <title>Salmonella paratyphi C: genetic divergence from Salmonella choleraesuis and pathogenic convergence with Salmonella typhi.</title>
        <authorList>
            <person name="Liu W.-Q."/>
            <person name="Feng Y."/>
            <person name="Wang Y."/>
            <person name="Zou Q.-H."/>
            <person name="Chen F."/>
            <person name="Guo J.-T."/>
            <person name="Peng Y.-H."/>
            <person name="Jin Y."/>
            <person name="Li Y.-G."/>
            <person name="Hu S.-N."/>
            <person name="Johnston R.N."/>
            <person name="Liu G.-R."/>
            <person name="Liu S.-L."/>
        </authorList>
    </citation>
    <scope>NUCLEOTIDE SEQUENCE [LARGE SCALE GENOMIC DNA]</scope>
    <source>
        <strain>RKS4594</strain>
    </source>
</reference>
<accession>C0Q0F3</accession>
<protein>
    <recommendedName>
        <fullName evidence="1">Siroheme synthase</fullName>
    </recommendedName>
    <domain>
        <recommendedName>
            <fullName evidence="1">Uroporphyrinogen-III C-methyltransferase</fullName>
            <shortName evidence="1">Urogen III methylase</shortName>
            <ecNumber evidence="1">2.1.1.107</ecNumber>
        </recommendedName>
        <alternativeName>
            <fullName evidence="1">SUMT</fullName>
        </alternativeName>
        <alternativeName>
            <fullName evidence="1">Uroporphyrinogen III methylase</fullName>
            <shortName evidence="1">UROM</shortName>
        </alternativeName>
    </domain>
    <domain>
        <recommendedName>
            <fullName evidence="1">Precorrin-2 dehydrogenase</fullName>
            <ecNumber evidence="1">1.3.1.76</ecNumber>
        </recommendedName>
    </domain>
    <domain>
        <recommendedName>
            <fullName evidence="1">Sirohydrochlorin ferrochelatase</fullName>
            <ecNumber evidence="1">4.99.1.4</ecNumber>
        </recommendedName>
    </domain>
</protein>
<sequence>MDHLPIFCQLRDRDCLIVGGGDVAERKARLLLEAGARLTVNALTFIPQFTVWANEGMLTLVEGPFDETLLDSCWLAIAATDDDTVNQRVSDAAESRRIFCNVVDAPKAASFIMPSIIDRSPLMVAVSSGGTSPVLARLLREKLESLLPQHLGQVARYAGQLRARVKKQFATMGERRRFWEKFFVNDRLAQSLANADEKAVNATTERLFSEPLDHRGEVVLVGAGPGDAGLLTLKGLQQIQQADIVVYDRLVSDDIMNLVRRDADRVFVGKRAGYHCVPQEEINQILLREAQKGKRVVRLKGGDPFIFGRGGEELETLCHAGIPFSVVPGITAASGCSAYSGIPLTHRDYAQSVRLVTGHLKTGGELDWENLAAEKQTLVFYMGLNQAATIQEKLIAFGMQADMPVALVENGTSVKQRVVHGVLTQLGELAQQVESPALIIVGRVVGLRDKLNWFSNY</sequence>